<accession>A8MFD2</accession>
<gene>
    <name evidence="1" type="primary">miaA</name>
    <name type="ordered locus">Clos_1552</name>
</gene>
<keyword id="KW-0067">ATP-binding</keyword>
<keyword id="KW-0460">Magnesium</keyword>
<keyword id="KW-0547">Nucleotide-binding</keyword>
<keyword id="KW-1185">Reference proteome</keyword>
<keyword id="KW-0808">Transferase</keyword>
<keyword id="KW-0819">tRNA processing</keyword>
<organism>
    <name type="scientific">Alkaliphilus oremlandii (strain OhILAs)</name>
    <name type="common">Clostridium oremlandii (strain OhILAs)</name>
    <dbReference type="NCBI Taxonomy" id="350688"/>
    <lineage>
        <taxon>Bacteria</taxon>
        <taxon>Bacillati</taxon>
        <taxon>Bacillota</taxon>
        <taxon>Clostridia</taxon>
        <taxon>Peptostreptococcales</taxon>
        <taxon>Natronincolaceae</taxon>
        <taxon>Alkaliphilus</taxon>
    </lineage>
</organism>
<evidence type="ECO:0000255" key="1">
    <source>
        <dbReference type="HAMAP-Rule" id="MF_00185"/>
    </source>
</evidence>
<feature type="chain" id="PRO_1000077383" description="tRNA dimethylallyltransferase">
    <location>
        <begin position="1"/>
        <end position="313"/>
    </location>
</feature>
<feature type="region of interest" description="Interaction with substrate tRNA" evidence="1">
    <location>
        <begin position="35"/>
        <end position="38"/>
    </location>
</feature>
<feature type="binding site" evidence="1">
    <location>
        <begin position="10"/>
        <end position="17"/>
    </location>
    <ligand>
        <name>ATP</name>
        <dbReference type="ChEBI" id="CHEBI:30616"/>
    </ligand>
</feature>
<feature type="binding site" evidence="1">
    <location>
        <begin position="12"/>
        <end position="17"/>
    </location>
    <ligand>
        <name>substrate</name>
    </ligand>
</feature>
<feature type="site" description="Interaction with substrate tRNA" evidence="1">
    <location>
        <position position="101"/>
    </location>
</feature>
<feature type="site" description="Interaction with substrate tRNA" evidence="1">
    <location>
        <position position="124"/>
    </location>
</feature>
<comment type="function">
    <text evidence="1">Catalyzes the transfer of a dimethylallyl group onto the adenine at position 37 in tRNAs that read codons beginning with uridine, leading to the formation of N6-(dimethylallyl)adenosine (i(6)A).</text>
</comment>
<comment type="catalytic activity">
    <reaction evidence="1">
        <text>adenosine(37) in tRNA + dimethylallyl diphosphate = N(6)-dimethylallyladenosine(37) in tRNA + diphosphate</text>
        <dbReference type="Rhea" id="RHEA:26482"/>
        <dbReference type="Rhea" id="RHEA-COMP:10162"/>
        <dbReference type="Rhea" id="RHEA-COMP:10375"/>
        <dbReference type="ChEBI" id="CHEBI:33019"/>
        <dbReference type="ChEBI" id="CHEBI:57623"/>
        <dbReference type="ChEBI" id="CHEBI:74411"/>
        <dbReference type="ChEBI" id="CHEBI:74415"/>
        <dbReference type="EC" id="2.5.1.75"/>
    </reaction>
</comment>
<comment type="cofactor">
    <cofactor evidence="1">
        <name>Mg(2+)</name>
        <dbReference type="ChEBI" id="CHEBI:18420"/>
    </cofactor>
</comment>
<comment type="subunit">
    <text evidence="1">Monomer.</text>
</comment>
<comment type="similarity">
    <text evidence="1">Belongs to the IPP transferase family.</text>
</comment>
<protein>
    <recommendedName>
        <fullName evidence="1">tRNA dimethylallyltransferase</fullName>
        <ecNumber evidence="1">2.5.1.75</ecNumber>
    </recommendedName>
    <alternativeName>
        <fullName evidence="1">Dimethylallyl diphosphate:tRNA dimethylallyltransferase</fullName>
        <shortName evidence="1">DMAPP:tRNA dimethylallyltransferase</shortName>
        <shortName evidence="1">DMATase</shortName>
    </alternativeName>
    <alternativeName>
        <fullName evidence="1">Isopentenyl-diphosphate:tRNA isopentenyltransferase</fullName>
        <shortName evidence="1">IPP transferase</shortName>
        <shortName evidence="1">IPPT</shortName>
        <shortName evidence="1">IPTase</shortName>
    </alternativeName>
</protein>
<proteinExistence type="inferred from homology"/>
<sequence length="313" mass="36170">MKKRLLIIVGPTAVGKTDTSIILAKELNGEIISADSMQIYRYMDIGTAKPNEEEKKGIPHHLIDIVNPDEEFSVAEFQKIAKNHINRLIEDEKLPIVAGGTGLYINSLIYDMDFTQSISNWELRGALEAEAREKGNEYVYNKLKQIDPHAAARIHPNNLKKVIRAIEVYEETGEKIGDFSTDLNINQEYDVFFVGLTRDREELYDRINMRVDAMIEQGLIEEVKNLLSLGYDKNLIAFKGLGYKEIIGYLEGAYSLEEAMDILKRDTRRYAKRQLTWFRRYENIHWYNLSNYDSCENLAECILKDFKGHFNSL</sequence>
<reference key="1">
    <citation type="submission" date="2007-10" db="EMBL/GenBank/DDBJ databases">
        <title>Complete genome of Alkaliphilus oremlandii OhILAs.</title>
        <authorList>
            <person name="Copeland A."/>
            <person name="Lucas S."/>
            <person name="Lapidus A."/>
            <person name="Barry K."/>
            <person name="Detter J.C."/>
            <person name="Glavina del Rio T."/>
            <person name="Hammon N."/>
            <person name="Israni S."/>
            <person name="Dalin E."/>
            <person name="Tice H."/>
            <person name="Pitluck S."/>
            <person name="Chain P."/>
            <person name="Malfatti S."/>
            <person name="Shin M."/>
            <person name="Vergez L."/>
            <person name="Schmutz J."/>
            <person name="Larimer F."/>
            <person name="Land M."/>
            <person name="Hauser L."/>
            <person name="Kyrpides N."/>
            <person name="Mikhailova N."/>
            <person name="Stolz J.F."/>
            <person name="Dawson A."/>
            <person name="Fisher E."/>
            <person name="Crable B."/>
            <person name="Perera E."/>
            <person name="Lisak J."/>
            <person name="Ranganathan M."/>
            <person name="Basu P."/>
            <person name="Richardson P."/>
        </authorList>
    </citation>
    <scope>NUCLEOTIDE SEQUENCE [LARGE SCALE GENOMIC DNA]</scope>
    <source>
        <strain>OhILAs</strain>
    </source>
</reference>
<name>MIAA_ALKOO</name>
<dbReference type="EC" id="2.5.1.75" evidence="1"/>
<dbReference type="EMBL" id="CP000853">
    <property type="protein sequence ID" value="ABW19095.1"/>
    <property type="molecule type" value="Genomic_DNA"/>
</dbReference>
<dbReference type="RefSeq" id="WP_012159407.1">
    <property type="nucleotide sequence ID" value="NC_009922.1"/>
</dbReference>
<dbReference type="SMR" id="A8MFD2"/>
<dbReference type="STRING" id="350688.Clos_1552"/>
<dbReference type="KEGG" id="aoe:Clos_1552"/>
<dbReference type="eggNOG" id="COG0324">
    <property type="taxonomic scope" value="Bacteria"/>
</dbReference>
<dbReference type="HOGENOM" id="CLU_032616_0_1_9"/>
<dbReference type="OrthoDB" id="9776390at2"/>
<dbReference type="Proteomes" id="UP000000269">
    <property type="component" value="Chromosome"/>
</dbReference>
<dbReference type="GO" id="GO:0005524">
    <property type="term" value="F:ATP binding"/>
    <property type="evidence" value="ECO:0007669"/>
    <property type="project" value="UniProtKB-UniRule"/>
</dbReference>
<dbReference type="GO" id="GO:0052381">
    <property type="term" value="F:tRNA dimethylallyltransferase activity"/>
    <property type="evidence" value="ECO:0007669"/>
    <property type="project" value="UniProtKB-UniRule"/>
</dbReference>
<dbReference type="GO" id="GO:0006400">
    <property type="term" value="P:tRNA modification"/>
    <property type="evidence" value="ECO:0007669"/>
    <property type="project" value="TreeGrafter"/>
</dbReference>
<dbReference type="Gene3D" id="1.10.20.140">
    <property type="match status" value="1"/>
</dbReference>
<dbReference type="Gene3D" id="3.40.50.300">
    <property type="entry name" value="P-loop containing nucleotide triphosphate hydrolases"/>
    <property type="match status" value="1"/>
</dbReference>
<dbReference type="HAMAP" id="MF_00185">
    <property type="entry name" value="IPP_trans"/>
    <property type="match status" value="1"/>
</dbReference>
<dbReference type="InterPro" id="IPR039657">
    <property type="entry name" value="Dimethylallyltransferase"/>
</dbReference>
<dbReference type="InterPro" id="IPR018022">
    <property type="entry name" value="IPT"/>
</dbReference>
<dbReference type="InterPro" id="IPR027417">
    <property type="entry name" value="P-loop_NTPase"/>
</dbReference>
<dbReference type="NCBIfam" id="TIGR00174">
    <property type="entry name" value="miaA"/>
    <property type="match status" value="1"/>
</dbReference>
<dbReference type="PANTHER" id="PTHR11088">
    <property type="entry name" value="TRNA DIMETHYLALLYLTRANSFERASE"/>
    <property type="match status" value="1"/>
</dbReference>
<dbReference type="PANTHER" id="PTHR11088:SF60">
    <property type="entry name" value="TRNA DIMETHYLALLYLTRANSFERASE"/>
    <property type="match status" value="1"/>
</dbReference>
<dbReference type="Pfam" id="PF01715">
    <property type="entry name" value="IPPT"/>
    <property type="match status" value="1"/>
</dbReference>
<dbReference type="SUPFAM" id="SSF52540">
    <property type="entry name" value="P-loop containing nucleoside triphosphate hydrolases"/>
    <property type="match status" value="2"/>
</dbReference>